<gene>
    <name evidence="1" type="primary">groES</name>
    <name evidence="1" type="synonym">groS</name>
    <name type="ordered locus">jk1729</name>
</gene>
<feature type="chain" id="PRO_1000025245" description="Co-chaperonin GroES">
    <location>
        <begin position="1"/>
        <end position="99"/>
    </location>
</feature>
<dbReference type="EMBL" id="CR931997">
    <property type="protein sequence ID" value="CAI37906.1"/>
    <property type="molecule type" value="Genomic_DNA"/>
</dbReference>
<dbReference type="RefSeq" id="WP_011274097.1">
    <property type="nucleotide sequence ID" value="NC_007164.1"/>
</dbReference>
<dbReference type="SMR" id="Q4JTF1"/>
<dbReference type="STRING" id="306537.jk1729"/>
<dbReference type="KEGG" id="cjk:jk1729"/>
<dbReference type="PATRIC" id="fig|306537.10.peg.1751"/>
<dbReference type="eggNOG" id="COG0234">
    <property type="taxonomic scope" value="Bacteria"/>
</dbReference>
<dbReference type="HOGENOM" id="CLU_132825_2_0_11"/>
<dbReference type="OrthoDB" id="9806791at2"/>
<dbReference type="Proteomes" id="UP000000545">
    <property type="component" value="Chromosome"/>
</dbReference>
<dbReference type="GO" id="GO:0005737">
    <property type="term" value="C:cytoplasm"/>
    <property type="evidence" value="ECO:0007669"/>
    <property type="project" value="UniProtKB-SubCell"/>
</dbReference>
<dbReference type="GO" id="GO:0005524">
    <property type="term" value="F:ATP binding"/>
    <property type="evidence" value="ECO:0007669"/>
    <property type="project" value="InterPro"/>
</dbReference>
<dbReference type="GO" id="GO:0046872">
    <property type="term" value="F:metal ion binding"/>
    <property type="evidence" value="ECO:0007669"/>
    <property type="project" value="TreeGrafter"/>
</dbReference>
<dbReference type="GO" id="GO:0044183">
    <property type="term" value="F:protein folding chaperone"/>
    <property type="evidence" value="ECO:0007669"/>
    <property type="project" value="InterPro"/>
</dbReference>
<dbReference type="GO" id="GO:0051087">
    <property type="term" value="F:protein-folding chaperone binding"/>
    <property type="evidence" value="ECO:0007669"/>
    <property type="project" value="TreeGrafter"/>
</dbReference>
<dbReference type="GO" id="GO:0051082">
    <property type="term" value="F:unfolded protein binding"/>
    <property type="evidence" value="ECO:0007669"/>
    <property type="project" value="TreeGrafter"/>
</dbReference>
<dbReference type="GO" id="GO:0051085">
    <property type="term" value="P:chaperone cofactor-dependent protein refolding"/>
    <property type="evidence" value="ECO:0007669"/>
    <property type="project" value="TreeGrafter"/>
</dbReference>
<dbReference type="CDD" id="cd00320">
    <property type="entry name" value="cpn10"/>
    <property type="match status" value="1"/>
</dbReference>
<dbReference type="FunFam" id="2.30.33.40:FF:000001">
    <property type="entry name" value="10 kDa chaperonin"/>
    <property type="match status" value="1"/>
</dbReference>
<dbReference type="Gene3D" id="2.30.33.40">
    <property type="entry name" value="GroES chaperonin"/>
    <property type="match status" value="1"/>
</dbReference>
<dbReference type="HAMAP" id="MF_00580">
    <property type="entry name" value="CH10"/>
    <property type="match status" value="1"/>
</dbReference>
<dbReference type="InterPro" id="IPR020818">
    <property type="entry name" value="Chaperonin_GroES"/>
</dbReference>
<dbReference type="InterPro" id="IPR037124">
    <property type="entry name" value="Chaperonin_GroES_sf"/>
</dbReference>
<dbReference type="InterPro" id="IPR018369">
    <property type="entry name" value="Chaprnonin_Cpn10_CS"/>
</dbReference>
<dbReference type="InterPro" id="IPR011032">
    <property type="entry name" value="GroES-like_sf"/>
</dbReference>
<dbReference type="NCBIfam" id="NF001530">
    <property type="entry name" value="PRK00364.1-6"/>
    <property type="match status" value="1"/>
</dbReference>
<dbReference type="NCBIfam" id="NF001531">
    <property type="entry name" value="PRK00364.2-2"/>
    <property type="match status" value="1"/>
</dbReference>
<dbReference type="NCBIfam" id="NF001533">
    <property type="entry name" value="PRK00364.2-4"/>
    <property type="match status" value="1"/>
</dbReference>
<dbReference type="NCBIfam" id="NF001534">
    <property type="entry name" value="PRK00364.2-5"/>
    <property type="match status" value="1"/>
</dbReference>
<dbReference type="PANTHER" id="PTHR10772">
    <property type="entry name" value="10 KDA HEAT SHOCK PROTEIN"/>
    <property type="match status" value="1"/>
</dbReference>
<dbReference type="PANTHER" id="PTHR10772:SF58">
    <property type="entry name" value="CO-CHAPERONIN GROES"/>
    <property type="match status" value="1"/>
</dbReference>
<dbReference type="Pfam" id="PF00166">
    <property type="entry name" value="Cpn10"/>
    <property type="match status" value="1"/>
</dbReference>
<dbReference type="PRINTS" id="PR00297">
    <property type="entry name" value="CHAPERONIN10"/>
</dbReference>
<dbReference type="SMART" id="SM00883">
    <property type="entry name" value="Cpn10"/>
    <property type="match status" value="1"/>
</dbReference>
<dbReference type="SUPFAM" id="SSF50129">
    <property type="entry name" value="GroES-like"/>
    <property type="match status" value="1"/>
</dbReference>
<dbReference type="PROSITE" id="PS00681">
    <property type="entry name" value="CHAPERONINS_CPN10"/>
    <property type="match status" value="1"/>
</dbReference>
<proteinExistence type="inferred from homology"/>
<name>CH10_CORJK</name>
<accession>Q4JTF1</accession>
<protein>
    <recommendedName>
        <fullName evidence="1">Co-chaperonin GroES</fullName>
    </recommendedName>
    <alternativeName>
        <fullName evidence="1">10 kDa chaperonin</fullName>
    </alternativeName>
    <alternativeName>
        <fullName evidence="1">Chaperonin-10</fullName>
        <shortName evidence="1">Cpn10</shortName>
    </alternativeName>
</protein>
<keyword id="KW-0143">Chaperone</keyword>
<keyword id="KW-0963">Cytoplasm</keyword>
<keyword id="KW-1185">Reference proteome</keyword>
<organism>
    <name type="scientific">Corynebacterium jeikeium (strain K411)</name>
    <dbReference type="NCBI Taxonomy" id="306537"/>
    <lineage>
        <taxon>Bacteria</taxon>
        <taxon>Bacillati</taxon>
        <taxon>Actinomycetota</taxon>
        <taxon>Actinomycetes</taxon>
        <taxon>Mycobacteriales</taxon>
        <taxon>Corynebacteriaceae</taxon>
        <taxon>Corynebacterium</taxon>
    </lineage>
</organism>
<evidence type="ECO:0000255" key="1">
    <source>
        <dbReference type="HAMAP-Rule" id="MF_00580"/>
    </source>
</evidence>
<reference key="1">
    <citation type="journal article" date="2005" name="J. Bacteriol.">
        <title>Complete genome sequence and analysis of the multiresistant nosocomial pathogen Corynebacterium jeikeium K411, a lipid-requiring bacterium of the human skin flora.</title>
        <authorList>
            <person name="Tauch A."/>
            <person name="Kaiser O."/>
            <person name="Hain T."/>
            <person name="Goesmann A."/>
            <person name="Weisshaar B."/>
            <person name="Albersmeier A."/>
            <person name="Bekel T."/>
            <person name="Bischoff N."/>
            <person name="Brune I."/>
            <person name="Chakraborty T."/>
            <person name="Kalinowski J."/>
            <person name="Meyer F."/>
            <person name="Rupp O."/>
            <person name="Schneiker S."/>
            <person name="Viehoever P."/>
            <person name="Puehler A."/>
        </authorList>
    </citation>
    <scope>NUCLEOTIDE SEQUENCE [LARGE SCALE GENOMIC DNA]</scope>
    <source>
        <strain>K411</strain>
    </source>
</reference>
<sequence>MANVNIKPLEDRVLVQIVEAETTTASGLVIPDSAKEKPQEATVIAVGPGRWADDDDRIPMDVKEGDTVVFSKYGGTELKYNGEEYLLLTQRDILAVIEK</sequence>
<comment type="function">
    <text evidence="1">Together with the chaperonin GroEL, plays an essential role in assisting protein folding. The GroEL-GroES system forms a nano-cage that allows encapsulation of the non-native substrate proteins and provides a physical environment optimized to promote and accelerate protein folding. GroES binds to the apical surface of the GroEL ring, thereby capping the opening of the GroEL channel.</text>
</comment>
<comment type="subunit">
    <text evidence="1">Heptamer of 7 subunits arranged in a ring. Interacts with the chaperonin GroEL.</text>
</comment>
<comment type="subcellular location">
    <subcellularLocation>
        <location evidence="1">Cytoplasm</location>
    </subcellularLocation>
</comment>
<comment type="similarity">
    <text evidence="1">Belongs to the GroES chaperonin family.</text>
</comment>